<gene>
    <name evidence="1" type="primary">clpX</name>
    <name type="ordered locus">RF_0219</name>
</gene>
<keyword id="KW-0067">ATP-binding</keyword>
<keyword id="KW-0143">Chaperone</keyword>
<keyword id="KW-0479">Metal-binding</keyword>
<keyword id="KW-0547">Nucleotide-binding</keyword>
<keyword id="KW-0862">Zinc</keyword>
<organism>
    <name type="scientific">Rickettsia felis (strain ATCC VR-1525 / URRWXCal2)</name>
    <name type="common">Rickettsia azadi</name>
    <dbReference type="NCBI Taxonomy" id="315456"/>
    <lineage>
        <taxon>Bacteria</taxon>
        <taxon>Pseudomonadati</taxon>
        <taxon>Pseudomonadota</taxon>
        <taxon>Alphaproteobacteria</taxon>
        <taxon>Rickettsiales</taxon>
        <taxon>Rickettsiaceae</taxon>
        <taxon>Rickettsieae</taxon>
        <taxon>Rickettsia</taxon>
        <taxon>spotted fever group</taxon>
    </lineage>
</organism>
<proteinExistence type="inferred from homology"/>
<sequence length="425" mass="46557">MVVEADKKELICSFCSKKQHEVKKLIAGPAVFICDECIDLCTDIMKEESKVALKQITSSIPTPQKICAILNDYVVGQDQAKKILAVAVYNHYKRLEYVQSGNNDVELNKSNILLIGPTGSGKTLLAQTLAKILDVPFTMADATSLTEAGYVGEDVENILLRLLIAAEFNIAKAQKGIIYIDEVDKIARKSENPSITRDVSGEGVQQALLKIMEGTVASVPPQGGRKHPQQDFVQLDTSNILFICGGAFMGIDSIITARTNHSSIGFAANVNIDKEKNNSEILKSLEIEDLTKFGLIPEFIGRLPIVTTLDELDKDALITILTKPKNAIVKQYQKQFELDDAELVIEAAALEAIAEKALAKKTGARGLRSILEHLLLDSMYKVAELKKQRVTITKEVVNGLVEPIMTSLISTKSNKKQPIIEDIPA</sequence>
<name>CLPX_RICFE</name>
<evidence type="ECO:0000255" key="1">
    <source>
        <dbReference type="HAMAP-Rule" id="MF_00175"/>
    </source>
</evidence>
<evidence type="ECO:0000255" key="2">
    <source>
        <dbReference type="PROSITE-ProRule" id="PRU01250"/>
    </source>
</evidence>
<protein>
    <recommendedName>
        <fullName evidence="1">ATP-dependent Clp protease ATP-binding subunit ClpX</fullName>
    </recommendedName>
</protein>
<feature type="chain" id="PRO_0000277979" description="ATP-dependent Clp protease ATP-binding subunit ClpX">
    <location>
        <begin position="1"/>
        <end position="425"/>
    </location>
</feature>
<feature type="domain" description="ClpX-type ZB" evidence="2">
    <location>
        <begin position="1"/>
        <end position="53"/>
    </location>
</feature>
<feature type="binding site" evidence="2">
    <location>
        <position position="12"/>
    </location>
    <ligand>
        <name>Zn(2+)</name>
        <dbReference type="ChEBI" id="CHEBI:29105"/>
    </ligand>
</feature>
<feature type="binding site" evidence="2">
    <location>
        <position position="15"/>
    </location>
    <ligand>
        <name>Zn(2+)</name>
        <dbReference type="ChEBI" id="CHEBI:29105"/>
    </ligand>
</feature>
<feature type="binding site" evidence="2">
    <location>
        <position position="34"/>
    </location>
    <ligand>
        <name>Zn(2+)</name>
        <dbReference type="ChEBI" id="CHEBI:29105"/>
    </ligand>
</feature>
<feature type="binding site" evidence="2">
    <location>
        <position position="37"/>
    </location>
    <ligand>
        <name>Zn(2+)</name>
        <dbReference type="ChEBI" id="CHEBI:29105"/>
    </ligand>
</feature>
<feature type="binding site" evidence="1">
    <location>
        <begin position="117"/>
        <end position="124"/>
    </location>
    <ligand>
        <name>ATP</name>
        <dbReference type="ChEBI" id="CHEBI:30616"/>
    </ligand>
</feature>
<accession>Q4UMY8</accession>
<dbReference type="EMBL" id="CP000053">
    <property type="protein sequence ID" value="AAY61070.1"/>
    <property type="molecule type" value="Genomic_DNA"/>
</dbReference>
<dbReference type="SMR" id="Q4UMY8"/>
<dbReference type="STRING" id="315456.RF_0219"/>
<dbReference type="KEGG" id="rfe:RF_0219"/>
<dbReference type="eggNOG" id="COG1219">
    <property type="taxonomic scope" value="Bacteria"/>
</dbReference>
<dbReference type="HOGENOM" id="CLU_014218_8_2_5"/>
<dbReference type="OrthoDB" id="9804062at2"/>
<dbReference type="Proteomes" id="UP000008548">
    <property type="component" value="Chromosome"/>
</dbReference>
<dbReference type="GO" id="GO:0009376">
    <property type="term" value="C:HslUV protease complex"/>
    <property type="evidence" value="ECO:0007669"/>
    <property type="project" value="TreeGrafter"/>
</dbReference>
<dbReference type="GO" id="GO:0005524">
    <property type="term" value="F:ATP binding"/>
    <property type="evidence" value="ECO:0007669"/>
    <property type="project" value="UniProtKB-UniRule"/>
</dbReference>
<dbReference type="GO" id="GO:0016887">
    <property type="term" value="F:ATP hydrolysis activity"/>
    <property type="evidence" value="ECO:0007669"/>
    <property type="project" value="InterPro"/>
</dbReference>
<dbReference type="GO" id="GO:0140662">
    <property type="term" value="F:ATP-dependent protein folding chaperone"/>
    <property type="evidence" value="ECO:0007669"/>
    <property type="project" value="InterPro"/>
</dbReference>
<dbReference type="GO" id="GO:0046983">
    <property type="term" value="F:protein dimerization activity"/>
    <property type="evidence" value="ECO:0007669"/>
    <property type="project" value="InterPro"/>
</dbReference>
<dbReference type="GO" id="GO:0051082">
    <property type="term" value="F:unfolded protein binding"/>
    <property type="evidence" value="ECO:0007669"/>
    <property type="project" value="UniProtKB-UniRule"/>
</dbReference>
<dbReference type="GO" id="GO:0008270">
    <property type="term" value="F:zinc ion binding"/>
    <property type="evidence" value="ECO:0007669"/>
    <property type="project" value="InterPro"/>
</dbReference>
<dbReference type="GO" id="GO:0051301">
    <property type="term" value="P:cell division"/>
    <property type="evidence" value="ECO:0007669"/>
    <property type="project" value="TreeGrafter"/>
</dbReference>
<dbReference type="GO" id="GO:0051603">
    <property type="term" value="P:proteolysis involved in protein catabolic process"/>
    <property type="evidence" value="ECO:0007669"/>
    <property type="project" value="TreeGrafter"/>
</dbReference>
<dbReference type="CDD" id="cd19497">
    <property type="entry name" value="RecA-like_ClpX"/>
    <property type="match status" value="1"/>
</dbReference>
<dbReference type="FunFam" id="1.10.8.60:FF:000002">
    <property type="entry name" value="ATP-dependent Clp protease ATP-binding subunit ClpX"/>
    <property type="match status" value="1"/>
</dbReference>
<dbReference type="FunFam" id="3.40.50.300:FF:000005">
    <property type="entry name" value="ATP-dependent Clp protease ATP-binding subunit ClpX"/>
    <property type="match status" value="1"/>
</dbReference>
<dbReference type="Gene3D" id="1.10.8.60">
    <property type="match status" value="1"/>
</dbReference>
<dbReference type="Gene3D" id="6.20.220.10">
    <property type="entry name" value="ClpX chaperone, C4-type zinc finger domain"/>
    <property type="match status" value="1"/>
</dbReference>
<dbReference type="Gene3D" id="3.40.50.300">
    <property type="entry name" value="P-loop containing nucleotide triphosphate hydrolases"/>
    <property type="match status" value="1"/>
</dbReference>
<dbReference type="HAMAP" id="MF_00175">
    <property type="entry name" value="ClpX"/>
    <property type="match status" value="1"/>
</dbReference>
<dbReference type="InterPro" id="IPR003593">
    <property type="entry name" value="AAA+_ATPase"/>
</dbReference>
<dbReference type="InterPro" id="IPR050052">
    <property type="entry name" value="ATP-dep_Clp_protease_ClpX"/>
</dbReference>
<dbReference type="InterPro" id="IPR003959">
    <property type="entry name" value="ATPase_AAA_core"/>
</dbReference>
<dbReference type="InterPro" id="IPR019489">
    <property type="entry name" value="Clp_ATPase_C"/>
</dbReference>
<dbReference type="InterPro" id="IPR004487">
    <property type="entry name" value="Clp_protease_ATP-bd_su_ClpX"/>
</dbReference>
<dbReference type="InterPro" id="IPR046425">
    <property type="entry name" value="ClpX_bact"/>
</dbReference>
<dbReference type="InterPro" id="IPR027417">
    <property type="entry name" value="P-loop_NTPase"/>
</dbReference>
<dbReference type="InterPro" id="IPR010603">
    <property type="entry name" value="Znf_CppX_C4"/>
</dbReference>
<dbReference type="InterPro" id="IPR038366">
    <property type="entry name" value="Znf_CppX_C4_sf"/>
</dbReference>
<dbReference type="NCBIfam" id="TIGR00382">
    <property type="entry name" value="clpX"/>
    <property type="match status" value="1"/>
</dbReference>
<dbReference type="NCBIfam" id="NF003745">
    <property type="entry name" value="PRK05342.1"/>
    <property type="match status" value="1"/>
</dbReference>
<dbReference type="PANTHER" id="PTHR48102:SF7">
    <property type="entry name" value="ATP-DEPENDENT CLP PROTEASE ATP-BINDING SUBUNIT CLPX-LIKE, MITOCHONDRIAL"/>
    <property type="match status" value="1"/>
</dbReference>
<dbReference type="PANTHER" id="PTHR48102">
    <property type="entry name" value="ATP-DEPENDENT CLP PROTEASE ATP-BINDING SUBUNIT CLPX-LIKE, MITOCHONDRIAL-RELATED"/>
    <property type="match status" value="1"/>
</dbReference>
<dbReference type="Pfam" id="PF07724">
    <property type="entry name" value="AAA_2"/>
    <property type="match status" value="1"/>
</dbReference>
<dbReference type="Pfam" id="PF10431">
    <property type="entry name" value="ClpB_D2-small"/>
    <property type="match status" value="1"/>
</dbReference>
<dbReference type="Pfam" id="PF06689">
    <property type="entry name" value="zf-C4_ClpX"/>
    <property type="match status" value="1"/>
</dbReference>
<dbReference type="SMART" id="SM00382">
    <property type="entry name" value="AAA"/>
    <property type="match status" value="1"/>
</dbReference>
<dbReference type="SMART" id="SM01086">
    <property type="entry name" value="ClpB_D2-small"/>
    <property type="match status" value="1"/>
</dbReference>
<dbReference type="SMART" id="SM00994">
    <property type="entry name" value="zf-C4_ClpX"/>
    <property type="match status" value="1"/>
</dbReference>
<dbReference type="SUPFAM" id="SSF57716">
    <property type="entry name" value="Glucocorticoid receptor-like (DNA-binding domain)"/>
    <property type="match status" value="1"/>
</dbReference>
<dbReference type="SUPFAM" id="SSF52540">
    <property type="entry name" value="P-loop containing nucleoside triphosphate hydrolases"/>
    <property type="match status" value="1"/>
</dbReference>
<dbReference type="PROSITE" id="PS51902">
    <property type="entry name" value="CLPX_ZB"/>
    <property type="match status" value="1"/>
</dbReference>
<reference key="1">
    <citation type="journal article" date="2005" name="PLoS Biol.">
        <title>The genome sequence of Rickettsia felis identifies the first putative conjugative plasmid in an obligate intracellular parasite.</title>
        <authorList>
            <person name="Ogata H."/>
            <person name="Renesto P."/>
            <person name="Audic S."/>
            <person name="Robert C."/>
            <person name="Blanc G."/>
            <person name="Fournier P.-E."/>
            <person name="Parinello H."/>
            <person name="Claverie J.-M."/>
            <person name="Raoult D."/>
        </authorList>
    </citation>
    <scope>NUCLEOTIDE SEQUENCE [LARGE SCALE GENOMIC DNA]</scope>
    <source>
        <strain>ATCC VR-1525 / URRWXCal2</strain>
    </source>
</reference>
<comment type="function">
    <text evidence="1">ATP-dependent specificity component of the Clp protease. It directs the protease to specific substrates. Can perform chaperone functions in the absence of ClpP.</text>
</comment>
<comment type="subunit">
    <text evidence="1">Component of the ClpX-ClpP complex. Forms a hexameric ring that, in the presence of ATP, binds to fourteen ClpP subunits assembled into a disk-like structure with a central cavity, resembling the structure of eukaryotic proteasomes.</text>
</comment>
<comment type="similarity">
    <text evidence="1">Belongs to the ClpX chaperone family.</text>
</comment>